<feature type="chain" id="PRO_1000094589" description="3-dehydroquinate synthase">
    <location>
        <begin position="1"/>
        <end position="370"/>
    </location>
</feature>
<feature type="binding site" evidence="1">
    <location>
        <begin position="108"/>
        <end position="112"/>
    </location>
    <ligand>
        <name>NAD(+)</name>
        <dbReference type="ChEBI" id="CHEBI:57540"/>
    </ligand>
</feature>
<feature type="binding site" evidence="1">
    <location>
        <begin position="132"/>
        <end position="133"/>
    </location>
    <ligand>
        <name>NAD(+)</name>
        <dbReference type="ChEBI" id="CHEBI:57540"/>
    </ligand>
</feature>
<feature type="binding site" evidence="1">
    <location>
        <position position="145"/>
    </location>
    <ligand>
        <name>NAD(+)</name>
        <dbReference type="ChEBI" id="CHEBI:57540"/>
    </ligand>
</feature>
<feature type="binding site" evidence="1">
    <location>
        <position position="154"/>
    </location>
    <ligand>
        <name>NAD(+)</name>
        <dbReference type="ChEBI" id="CHEBI:57540"/>
    </ligand>
</feature>
<feature type="binding site" evidence="1">
    <location>
        <position position="187"/>
    </location>
    <ligand>
        <name>Zn(2+)</name>
        <dbReference type="ChEBI" id="CHEBI:29105"/>
    </ligand>
</feature>
<feature type="binding site" evidence="1">
    <location>
        <position position="249"/>
    </location>
    <ligand>
        <name>Zn(2+)</name>
        <dbReference type="ChEBI" id="CHEBI:29105"/>
    </ligand>
</feature>
<feature type="binding site" evidence="1">
    <location>
        <position position="267"/>
    </location>
    <ligand>
        <name>Zn(2+)</name>
        <dbReference type="ChEBI" id="CHEBI:29105"/>
    </ligand>
</feature>
<keyword id="KW-0028">Amino-acid biosynthesis</keyword>
<keyword id="KW-0057">Aromatic amino acid biosynthesis</keyword>
<keyword id="KW-0170">Cobalt</keyword>
<keyword id="KW-0963">Cytoplasm</keyword>
<keyword id="KW-0456">Lyase</keyword>
<keyword id="KW-0479">Metal-binding</keyword>
<keyword id="KW-0520">NAD</keyword>
<keyword id="KW-0547">Nucleotide-binding</keyword>
<keyword id="KW-0862">Zinc</keyword>
<name>AROB_CERS5</name>
<evidence type="ECO:0000255" key="1">
    <source>
        <dbReference type="HAMAP-Rule" id="MF_00110"/>
    </source>
</evidence>
<sequence>MTVDAVRVELGARAYEVRIGPGLIARAGAEIAPLLRRPKLAILTDETVAGLHLAPFQAALAEAGIASSALALPAGEATKGWEQFSRAVEWLLEEKVERRDVVVALGGGVIGDLAGFAAAVLRRGVRFVQVPTTLLAQVDSSVGGKTGINTAQGKNLVGAFHQPSLVLADIGVLESLPARDFLAGYGEVVKYGLLGDADFFEWLEGAAPRLASDPEARQRAVRRSVEMKAEIVARDETEEGDRALLNLGHTFCHALEKATGYSDRLLHGEGVAIGCALAFELSQHMGLCPQEAPSRLRAHLRAMGMKVDLRDIPGDLPDAEGLLRLMAQDKKVVDGKLRFILARDIGAAFVAKDVPGDLVRRILQEALATR</sequence>
<organism>
    <name type="scientific">Cereibacter sphaeroides (strain ATCC 17025 / ATH 2.4.3)</name>
    <name type="common">Rhodobacter sphaeroides</name>
    <dbReference type="NCBI Taxonomy" id="349102"/>
    <lineage>
        <taxon>Bacteria</taxon>
        <taxon>Pseudomonadati</taxon>
        <taxon>Pseudomonadota</taxon>
        <taxon>Alphaproteobacteria</taxon>
        <taxon>Rhodobacterales</taxon>
        <taxon>Paracoccaceae</taxon>
        <taxon>Cereibacter</taxon>
    </lineage>
</organism>
<comment type="function">
    <text evidence="1">Catalyzes the conversion of 3-deoxy-D-arabino-heptulosonate 7-phosphate (DAHP) to dehydroquinate (DHQ).</text>
</comment>
<comment type="catalytic activity">
    <reaction evidence="1">
        <text>7-phospho-2-dehydro-3-deoxy-D-arabino-heptonate = 3-dehydroquinate + phosphate</text>
        <dbReference type="Rhea" id="RHEA:21968"/>
        <dbReference type="ChEBI" id="CHEBI:32364"/>
        <dbReference type="ChEBI" id="CHEBI:43474"/>
        <dbReference type="ChEBI" id="CHEBI:58394"/>
        <dbReference type="EC" id="4.2.3.4"/>
    </reaction>
</comment>
<comment type="cofactor">
    <cofactor evidence="1">
        <name>Co(2+)</name>
        <dbReference type="ChEBI" id="CHEBI:48828"/>
    </cofactor>
    <cofactor evidence="1">
        <name>Zn(2+)</name>
        <dbReference type="ChEBI" id="CHEBI:29105"/>
    </cofactor>
    <text evidence="1">Binds 1 divalent metal cation per subunit. Can use either Co(2+) or Zn(2+).</text>
</comment>
<comment type="cofactor">
    <cofactor evidence="1">
        <name>NAD(+)</name>
        <dbReference type="ChEBI" id="CHEBI:57540"/>
    </cofactor>
</comment>
<comment type="pathway">
    <text evidence="1">Metabolic intermediate biosynthesis; chorismate biosynthesis; chorismate from D-erythrose 4-phosphate and phosphoenolpyruvate: step 2/7.</text>
</comment>
<comment type="subcellular location">
    <subcellularLocation>
        <location evidence="1">Cytoplasm</location>
    </subcellularLocation>
</comment>
<comment type="similarity">
    <text evidence="1">Belongs to the sugar phosphate cyclases superfamily. Dehydroquinate synthase family.</text>
</comment>
<accession>A4WSQ8</accession>
<protein>
    <recommendedName>
        <fullName evidence="1">3-dehydroquinate synthase</fullName>
        <shortName evidence="1">DHQS</shortName>
        <ecNumber evidence="1">4.2.3.4</ecNumber>
    </recommendedName>
</protein>
<reference key="1">
    <citation type="submission" date="2007-04" db="EMBL/GenBank/DDBJ databases">
        <title>Complete sequence of chromosome of Rhodobacter sphaeroides ATCC 17025.</title>
        <authorList>
            <consortium name="US DOE Joint Genome Institute"/>
            <person name="Copeland A."/>
            <person name="Lucas S."/>
            <person name="Lapidus A."/>
            <person name="Barry K."/>
            <person name="Detter J.C."/>
            <person name="Glavina del Rio T."/>
            <person name="Hammon N."/>
            <person name="Israni S."/>
            <person name="Dalin E."/>
            <person name="Tice H."/>
            <person name="Pitluck S."/>
            <person name="Chertkov O."/>
            <person name="Brettin T."/>
            <person name="Bruce D."/>
            <person name="Han C."/>
            <person name="Schmutz J."/>
            <person name="Larimer F."/>
            <person name="Land M."/>
            <person name="Hauser L."/>
            <person name="Kyrpides N."/>
            <person name="Kim E."/>
            <person name="Richardson P."/>
            <person name="Mackenzie C."/>
            <person name="Choudhary M."/>
            <person name="Donohue T.J."/>
            <person name="Kaplan S."/>
        </authorList>
    </citation>
    <scope>NUCLEOTIDE SEQUENCE [LARGE SCALE GENOMIC DNA]</scope>
    <source>
        <strain>ATCC 17025 / ATH 2.4.3</strain>
    </source>
</reference>
<gene>
    <name evidence="1" type="primary">aroB</name>
    <name type="ordered locus">Rsph17025_1528</name>
</gene>
<dbReference type="EC" id="4.2.3.4" evidence="1"/>
<dbReference type="EMBL" id="CP000661">
    <property type="protein sequence ID" value="ABP70422.1"/>
    <property type="molecule type" value="Genomic_DNA"/>
</dbReference>
<dbReference type="SMR" id="A4WSQ8"/>
<dbReference type="STRING" id="349102.Rsph17025_1528"/>
<dbReference type="KEGG" id="rsq:Rsph17025_1528"/>
<dbReference type="eggNOG" id="COG0337">
    <property type="taxonomic scope" value="Bacteria"/>
</dbReference>
<dbReference type="HOGENOM" id="CLU_001201_0_2_5"/>
<dbReference type="BioCyc" id="RSPH349102:G1G8M-1574-MONOMER"/>
<dbReference type="UniPathway" id="UPA00053">
    <property type="reaction ID" value="UER00085"/>
</dbReference>
<dbReference type="GO" id="GO:0005737">
    <property type="term" value="C:cytoplasm"/>
    <property type="evidence" value="ECO:0007669"/>
    <property type="project" value="UniProtKB-SubCell"/>
</dbReference>
<dbReference type="GO" id="GO:0003856">
    <property type="term" value="F:3-dehydroquinate synthase activity"/>
    <property type="evidence" value="ECO:0007669"/>
    <property type="project" value="UniProtKB-UniRule"/>
</dbReference>
<dbReference type="GO" id="GO:0046872">
    <property type="term" value="F:metal ion binding"/>
    <property type="evidence" value="ECO:0007669"/>
    <property type="project" value="UniProtKB-KW"/>
</dbReference>
<dbReference type="GO" id="GO:0000166">
    <property type="term" value="F:nucleotide binding"/>
    <property type="evidence" value="ECO:0007669"/>
    <property type="project" value="UniProtKB-KW"/>
</dbReference>
<dbReference type="GO" id="GO:0008652">
    <property type="term" value="P:amino acid biosynthetic process"/>
    <property type="evidence" value="ECO:0007669"/>
    <property type="project" value="UniProtKB-KW"/>
</dbReference>
<dbReference type="GO" id="GO:0009073">
    <property type="term" value="P:aromatic amino acid family biosynthetic process"/>
    <property type="evidence" value="ECO:0007669"/>
    <property type="project" value="UniProtKB-KW"/>
</dbReference>
<dbReference type="GO" id="GO:0009423">
    <property type="term" value="P:chorismate biosynthetic process"/>
    <property type="evidence" value="ECO:0007669"/>
    <property type="project" value="UniProtKB-UniRule"/>
</dbReference>
<dbReference type="CDD" id="cd08195">
    <property type="entry name" value="DHQS"/>
    <property type="match status" value="1"/>
</dbReference>
<dbReference type="FunFam" id="3.40.50.1970:FF:000007">
    <property type="entry name" value="Pentafunctional AROM polypeptide"/>
    <property type="match status" value="1"/>
</dbReference>
<dbReference type="Gene3D" id="3.40.50.1970">
    <property type="match status" value="1"/>
</dbReference>
<dbReference type="Gene3D" id="1.20.1090.10">
    <property type="entry name" value="Dehydroquinate synthase-like - alpha domain"/>
    <property type="match status" value="1"/>
</dbReference>
<dbReference type="HAMAP" id="MF_00110">
    <property type="entry name" value="DHQ_synthase"/>
    <property type="match status" value="1"/>
</dbReference>
<dbReference type="InterPro" id="IPR050071">
    <property type="entry name" value="Dehydroquinate_synthase"/>
</dbReference>
<dbReference type="InterPro" id="IPR016037">
    <property type="entry name" value="DHQ_synth_AroB"/>
</dbReference>
<dbReference type="InterPro" id="IPR030963">
    <property type="entry name" value="DHQ_synth_fam"/>
</dbReference>
<dbReference type="InterPro" id="IPR030960">
    <property type="entry name" value="DHQS/DOIS_N"/>
</dbReference>
<dbReference type="InterPro" id="IPR056179">
    <property type="entry name" value="DHQS_C"/>
</dbReference>
<dbReference type="NCBIfam" id="TIGR01357">
    <property type="entry name" value="aroB"/>
    <property type="match status" value="1"/>
</dbReference>
<dbReference type="PANTHER" id="PTHR43622">
    <property type="entry name" value="3-DEHYDROQUINATE SYNTHASE"/>
    <property type="match status" value="1"/>
</dbReference>
<dbReference type="PANTHER" id="PTHR43622:SF7">
    <property type="entry name" value="3-DEHYDROQUINATE SYNTHASE, CHLOROPLASTIC"/>
    <property type="match status" value="1"/>
</dbReference>
<dbReference type="Pfam" id="PF01761">
    <property type="entry name" value="DHQ_synthase"/>
    <property type="match status" value="1"/>
</dbReference>
<dbReference type="Pfam" id="PF24621">
    <property type="entry name" value="DHQS_C"/>
    <property type="match status" value="1"/>
</dbReference>
<dbReference type="PIRSF" id="PIRSF001455">
    <property type="entry name" value="DHQ_synth"/>
    <property type="match status" value="1"/>
</dbReference>
<dbReference type="SUPFAM" id="SSF56796">
    <property type="entry name" value="Dehydroquinate synthase-like"/>
    <property type="match status" value="1"/>
</dbReference>
<proteinExistence type="inferred from homology"/>